<dbReference type="EC" id="2.5.1.75" evidence="1"/>
<dbReference type="EMBL" id="CP001175">
    <property type="protein sequence ID" value="ACK39624.1"/>
    <property type="molecule type" value="Genomic_DNA"/>
</dbReference>
<dbReference type="RefSeq" id="WP_012581398.1">
    <property type="nucleotide sequence ID" value="NC_011660.1"/>
</dbReference>
<dbReference type="SMR" id="B8DG34"/>
<dbReference type="KEGG" id="lmh:LMHCC_1278"/>
<dbReference type="HOGENOM" id="CLU_032616_0_1_9"/>
<dbReference type="GO" id="GO:0005524">
    <property type="term" value="F:ATP binding"/>
    <property type="evidence" value="ECO:0007669"/>
    <property type="project" value="UniProtKB-UniRule"/>
</dbReference>
<dbReference type="GO" id="GO:0052381">
    <property type="term" value="F:tRNA dimethylallyltransferase activity"/>
    <property type="evidence" value="ECO:0007669"/>
    <property type="project" value="UniProtKB-UniRule"/>
</dbReference>
<dbReference type="GO" id="GO:0006400">
    <property type="term" value="P:tRNA modification"/>
    <property type="evidence" value="ECO:0007669"/>
    <property type="project" value="TreeGrafter"/>
</dbReference>
<dbReference type="FunFam" id="1.10.20.140:FF:000001">
    <property type="entry name" value="tRNA dimethylallyltransferase"/>
    <property type="match status" value="1"/>
</dbReference>
<dbReference type="Gene3D" id="1.10.20.140">
    <property type="match status" value="1"/>
</dbReference>
<dbReference type="Gene3D" id="3.40.50.300">
    <property type="entry name" value="P-loop containing nucleotide triphosphate hydrolases"/>
    <property type="match status" value="1"/>
</dbReference>
<dbReference type="HAMAP" id="MF_00185">
    <property type="entry name" value="IPP_trans"/>
    <property type="match status" value="1"/>
</dbReference>
<dbReference type="InterPro" id="IPR039657">
    <property type="entry name" value="Dimethylallyltransferase"/>
</dbReference>
<dbReference type="InterPro" id="IPR018022">
    <property type="entry name" value="IPT"/>
</dbReference>
<dbReference type="InterPro" id="IPR027417">
    <property type="entry name" value="P-loop_NTPase"/>
</dbReference>
<dbReference type="NCBIfam" id="TIGR00174">
    <property type="entry name" value="miaA"/>
    <property type="match status" value="1"/>
</dbReference>
<dbReference type="PANTHER" id="PTHR11088">
    <property type="entry name" value="TRNA DIMETHYLALLYLTRANSFERASE"/>
    <property type="match status" value="1"/>
</dbReference>
<dbReference type="PANTHER" id="PTHR11088:SF60">
    <property type="entry name" value="TRNA DIMETHYLALLYLTRANSFERASE"/>
    <property type="match status" value="1"/>
</dbReference>
<dbReference type="Pfam" id="PF01715">
    <property type="entry name" value="IPPT"/>
    <property type="match status" value="1"/>
</dbReference>
<dbReference type="SUPFAM" id="SSF52540">
    <property type="entry name" value="P-loop containing nucleoside triphosphate hydrolases"/>
    <property type="match status" value="1"/>
</dbReference>
<keyword id="KW-0067">ATP-binding</keyword>
<keyword id="KW-0460">Magnesium</keyword>
<keyword id="KW-0547">Nucleotide-binding</keyword>
<keyword id="KW-0808">Transferase</keyword>
<keyword id="KW-0819">tRNA processing</keyword>
<feature type="chain" id="PRO_0000377209" description="tRNA dimethylallyltransferase">
    <location>
        <begin position="1"/>
        <end position="305"/>
    </location>
</feature>
<feature type="region of interest" description="Interaction with substrate tRNA" evidence="1">
    <location>
        <begin position="36"/>
        <end position="39"/>
    </location>
</feature>
<feature type="binding site" evidence="1">
    <location>
        <begin position="11"/>
        <end position="18"/>
    </location>
    <ligand>
        <name>ATP</name>
        <dbReference type="ChEBI" id="CHEBI:30616"/>
    </ligand>
</feature>
<feature type="binding site" evidence="1">
    <location>
        <begin position="13"/>
        <end position="18"/>
    </location>
    <ligand>
        <name>substrate</name>
    </ligand>
</feature>
<feature type="site" description="Interaction with substrate tRNA" evidence="1">
    <location>
        <position position="102"/>
    </location>
</feature>
<comment type="function">
    <text evidence="1">Catalyzes the transfer of a dimethylallyl group onto the adenine at position 37 in tRNAs that read codons beginning with uridine, leading to the formation of N6-(dimethylallyl)adenosine (i(6)A).</text>
</comment>
<comment type="catalytic activity">
    <reaction evidence="1">
        <text>adenosine(37) in tRNA + dimethylallyl diphosphate = N(6)-dimethylallyladenosine(37) in tRNA + diphosphate</text>
        <dbReference type="Rhea" id="RHEA:26482"/>
        <dbReference type="Rhea" id="RHEA-COMP:10162"/>
        <dbReference type="Rhea" id="RHEA-COMP:10375"/>
        <dbReference type="ChEBI" id="CHEBI:33019"/>
        <dbReference type="ChEBI" id="CHEBI:57623"/>
        <dbReference type="ChEBI" id="CHEBI:74411"/>
        <dbReference type="ChEBI" id="CHEBI:74415"/>
        <dbReference type="EC" id="2.5.1.75"/>
    </reaction>
</comment>
<comment type="cofactor">
    <cofactor evidence="1">
        <name>Mg(2+)</name>
        <dbReference type="ChEBI" id="CHEBI:18420"/>
    </cofactor>
</comment>
<comment type="subunit">
    <text evidence="1">Monomer.</text>
</comment>
<comment type="similarity">
    <text evidence="1">Belongs to the IPP transferase family.</text>
</comment>
<name>MIAA_LISMH</name>
<accession>B8DG34</accession>
<sequence length="305" mass="34810">MSKIPVIVIVGPTAVGKTSLSIELAKRLDGEIISGDSMQVYRGLDIGTAKITPEEMGGIKHYLIDVTDPSVPFTAAKFQSETRKAIETIHQAGKLPIIVGGTGLYIQSVFYDYDFGNASEDKAYRAKLEQLDKVILWQMLEQQDPESARQIHENNKRRVIRALEVMHLTGKPFSEYQVHNVLNDTYKPLFLGLDLDRELLYERINQRVNLMFEQGLITEAKKLYEQHLVDVPAVRGIGYKELFPYFERKSSLEEAKELIQKNSRHFAKRQLTWFRNRMDIDWIQAGVSSTESEALNKATTFLTAK</sequence>
<evidence type="ECO:0000255" key="1">
    <source>
        <dbReference type="HAMAP-Rule" id="MF_00185"/>
    </source>
</evidence>
<organism>
    <name type="scientific">Listeria monocytogenes serotype 4a (strain HCC23)</name>
    <dbReference type="NCBI Taxonomy" id="552536"/>
    <lineage>
        <taxon>Bacteria</taxon>
        <taxon>Bacillati</taxon>
        <taxon>Bacillota</taxon>
        <taxon>Bacilli</taxon>
        <taxon>Bacillales</taxon>
        <taxon>Listeriaceae</taxon>
        <taxon>Listeria</taxon>
    </lineage>
</organism>
<gene>
    <name evidence="1" type="primary">miaA</name>
    <name type="ordered locus">LMHCC_1278</name>
</gene>
<protein>
    <recommendedName>
        <fullName evidence="1">tRNA dimethylallyltransferase</fullName>
        <ecNumber evidence="1">2.5.1.75</ecNumber>
    </recommendedName>
    <alternativeName>
        <fullName evidence="1">Dimethylallyl diphosphate:tRNA dimethylallyltransferase</fullName>
        <shortName evidence="1">DMAPP:tRNA dimethylallyltransferase</shortName>
        <shortName evidence="1">DMATase</shortName>
    </alternativeName>
    <alternativeName>
        <fullName evidence="1">Isopentenyl-diphosphate:tRNA isopentenyltransferase</fullName>
        <shortName evidence="1">IPP transferase</shortName>
        <shortName evidence="1">IPPT</shortName>
        <shortName evidence="1">IPTase</shortName>
    </alternativeName>
</protein>
<reference key="1">
    <citation type="journal article" date="2011" name="J. Bacteriol.">
        <title>Genome sequence of lineage III Listeria monocytogenes strain HCC23.</title>
        <authorList>
            <person name="Steele C.L."/>
            <person name="Donaldson J.R."/>
            <person name="Paul D."/>
            <person name="Banes M.M."/>
            <person name="Arick T."/>
            <person name="Bridges S.M."/>
            <person name="Lawrence M.L."/>
        </authorList>
    </citation>
    <scope>NUCLEOTIDE SEQUENCE [LARGE SCALE GENOMIC DNA]</scope>
    <source>
        <strain>HCC23</strain>
    </source>
</reference>
<proteinExistence type="inferred from homology"/>